<gene>
    <name evidence="1" type="primary">glmM</name>
    <name type="ordered locus">Bcenmc03_1270</name>
</gene>
<name>GLMM_BURO0</name>
<sequence length="451" mass="47127">MGRRYFGTDGIRGTVGEAPITPDFVLRLGYAAGKVLAGSADVAAGSRPTVLIGKDTRVSGYMLEAALEAGFSAAGVDVMLAGPMPTPGVAYLTRALRLSAGVVISASHNPYHDNGIKFFSADGNKLPDDTEAAIEAWLDKPLECAPSDGLGKARRLDDAAGRYIEFCKSTFPAAFDLRGLKLVIDCAHGAAYQIAPHVFHELGADVIPIGVAPNGFNINDGVGATAPDALVRAVRANHADLGIALDGDADRLQVVDATGRLYNGDELLYVLVKDRIATDGKVDGAVGTLMTNLAVEVALQREGVKFVRAAVGDRYVLEQLREHGWQLGAEGSGHILSLDRHSTGDGIVSALLVLAALKRSGRTLAQVLDGVTLFPQKLINVRMKPGADWKGSASIRAAIDAAEAALAGSGRVLIRASGTEPVLRVMVEAQQAADAVRHAETIADAVRAATT</sequence>
<proteinExistence type="inferred from homology"/>
<organism>
    <name type="scientific">Burkholderia orbicola (strain MC0-3)</name>
    <dbReference type="NCBI Taxonomy" id="406425"/>
    <lineage>
        <taxon>Bacteria</taxon>
        <taxon>Pseudomonadati</taxon>
        <taxon>Pseudomonadota</taxon>
        <taxon>Betaproteobacteria</taxon>
        <taxon>Burkholderiales</taxon>
        <taxon>Burkholderiaceae</taxon>
        <taxon>Burkholderia</taxon>
        <taxon>Burkholderia cepacia complex</taxon>
        <taxon>Burkholderia orbicola</taxon>
    </lineage>
</organism>
<dbReference type="EC" id="5.4.2.10" evidence="1"/>
<dbReference type="EMBL" id="CP000958">
    <property type="protein sequence ID" value="ACA90445.1"/>
    <property type="molecule type" value="Genomic_DNA"/>
</dbReference>
<dbReference type="RefSeq" id="WP_011545088.1">
    <property type="nucleotide sequence ID" value="NC_010508.1"/>
</dbReference>
<dbReference type="SMR" id="B1JZF2"/>
<dbReference type="GeneID" id="83048063"/>
<dbReference type="KEGG" id="bcm:Bcenmc03_1270"/>
<dbReference type="HOGENOM" id="CLU_016950_7_0_4"/>
<dbReference type="Proteomes" id="UP000002169">
    <property type="component" value="Chromosome 1"/>
</dbReference>
<dbReference type="GO" id="GO:0005829">
    <property type="term" value="C:cytosol"/>
    <property type="evidence" value="ECO:0007669"/>
    <property type="project" value="TreeGrafter"/>
</dbReference>
<dbReference type="GO" id="GO:0000287">
    <property type="term" value="F:magnesium ion binding"/>
    <property type="evidence" value="ECO:0007669"/>
    <property type="project" value="UniProtKB-UniRule"/>
</dbReference>
<dbReference type="GO" id="GO:0008966">
    <property type="term" value="F:phosphoglucosamine mutase activity"/>
    <property type="evidence" value="ECO:0007669"/>
    <property type="project" value="UniProtKB-UniRule"/>
</dbReference>
<dbReference type="GO" id="GO:0004615">
    <property type="term" value="F:phosphomannomutase activity"/>
    <property type="evidence" value="ECO:0007669"/>
    <property type="project" value="TreeGrafter"/>
</dbReference>
<dbReference type="GO" id="GO:0005975">
    <property type="term" value="P:carbohydrate metabolic process"/>
    <property type="evidence" value="ECO:0007669"/>
    <property type="project" value="InterPro"/>
</dbReference>
<dbReference type="GO" id="GO:0009252">
    <property type="term" value="P:peptidoglycan biosynthetic process"/>
    <property type="evidence" value="ECO:0007669"/>
    <property type="project" value="TreeGrafter"/>
</dbReference>
<dbReference type="GO" id="GO:0006048">
    <property type="term" value="P:UDP-N-acetylglucosamine biosynthetic process"/>
    <property type="evidence" value="ECO:0007669"/>
    <property type="project" value="TreeGrafter"/>
</dbReference>
<dbReference type="CDD" id="cd05802">
    <property type="entry name" value="GlmM"/>
    <property type="match status" value="1"/>
</dbReference>
<dbReference type="FunFam" id="3.30.310.50:FF:000001">
    <property type="entry name" value="Phosphoglucosamine mutase"/>
    <property type="match status" value="1"/>
</dbReference>
<dbReference type="FunFam" id="3.40.120.10:FF:000001">
    <property type="entry name" value="Phosphoglucosamine mutase"/>
    <property type="match status" value="1"/>
</dbReference>
<dbReference type="FunFam" id="3.40.120.10:FF:000003">
    <property type="entry name" value="Phosphoglucosamine mutase"/>
    <property type="match status" value="1"/>
</dbReference>
<dbReference type="Gene3D" id="3.40.120.10">
    <property type="entry name" value="Alpha-D-Glucose-1,6-Bisphosphate, subunit A, domain 3"/>
    <property type="match status" value="3"/>
</dbReference>
<dbReference type="Gene3D" id="3.30.310.50">
    <property type="entry name" value="Alpha-D-phosphohexomutase, C-terminal domain"/>
    <property type="match status" value="1"/>
</dbReference>
<dbReference type="HAMAP" id="MF_01554_B">
    <property type="entry name" value="GlmM_B"/>
    <property type="match status" value="1"/>
</dbReference>
<dbReference type="InterPro" id="IPR005844">
    <property type="entry name" value="A-D-PHexomutase_a/b/a-I"/>
</dbReference>
<dbReference type="InterPro" id="IPR016055">
    <property type="entry name" value="A-D-PHexomutase_a/b/a-I/II/III"/>
</dbReference>
<dbReference type="InterPro" id="IPR005845">
    <property type="entry name" value="A-D-PHexomutase_a/b/a-II"/>
</dbReference>
<dbReference type="InterPro" id="IPR005846">
    <property type="entry name" value="A-D-PHexomutase_a/b/a-III"/>
</dbReference>
<dbReference type="InterPro" id="IPR005843">
    <property type="entry name" value="A-D-PHexomutase_C"/>
</dbReference>
<dbReference type="InterPro" id="IPR036900">
    <property type="entry name" value="A-D-PHexomutase_C_sf"/>
</dbReference>
<dbReference type="InterPro" id="IPR016066">
    <property type="entry name" value="A-D-PHexomutase_CS"/>
</dbReference>
<dbReference type="InterPro" id="IPR005841">
    <property type="entry name" value="Alpha-D-phosphohexomutase_SF"/>
</dbReference>
<dbReference type="InterPro" id="IPR006352">
    <property type="entry name" value="GlmM_bact"/>
</dbReference>
<dbReference type="InterPro" id="IPR050060">
    <property type="entry name" value="Phosphoglucosamine_mutase"/>
</dbReference>
<dbReference type="NCBIfam" id="TIGR01455">
    <property type="entry name" value="glmM"/>
    <property type="match status" value="1"/>
</dbReference>
<dbReference type="NCBIfam" id="NF008139">
    <property type="entry name" value="PRK10887.1"/>
    <property type="match status" value="1"/>
</dbReference>
<dbReference type="PANTHER" id="PTHR42946:SF1">
    <property type="entry name" value="PHOSPHOGLUCOMUTASE (ALPHA-D-GLUCOSE-1,6-BISPHOSPHATE-DEPENDENT)"/>
    <property type="match status" value="1"/>
</dbReference>
<dbReference type="PANTHER" id="PTHR42946">
    <property type="entry name" value="PHOSPHOHEXOSE MUTASE"/>
    <property type="match status" value="1"/>
</dbReference>
<dbReference type="Pfam" id="PF02878">
    <property type="entry name" value="PGM_PMM_I"/>
    <property type="match status" value="1"/>
</dbReference>
<dbReference type="Pfam" id="PF02879">
    <property type="entry name" value="PGM_PMM_II"/>
    <property type="match status" value="1"/>
</dbReference>
<dbReference type="Pfam" id="PF02880">
    <property type="entry name" value="PGM_PMM_III"/>
    <property type="match status" value="1"/>
</dbReference>
<dbReference type="Pfam" id="PF00408">
    <property type="entry name" value="PGM_PMM_IV"/>
    <property type="match status" value="1"/>
</dbReference>
<dbReference type="PRINTS" id="PR00509">
    <property type="entry name" value="PGMPMM"/>
</dbReference>
<dbReference type="SUPFAM" id="SSF55957">
    <property type="entry name" value="Phosphoglucomutase, C-terminal domain"/>
    <property type="match status" value="1"/>
</dbReference>
<dbReference type="SUPFAM" id="SSF53738">
    <property type="entry name" value="Phosphoglucomutase, first 3 domains"/>
    <property type="match status" value="3"/>
</dbReference>
<dbReference type="PROSITE" id="PS00710">
    <property type="entry name" value="PGM_PMM"/>
    <property type="match status" value="1"/>
</dbReference>
<accession>B1JZF2</accession>
<keyword id="KW-0413">Isomerase</keyword>
<keyword id="KW-0460">Magnesium</keyword>
<keyword id="KW-0479">Metal-binding</keyword>
<keyword id="KW-0597">Phosphoprotein</keyword>
<comment type="function">
    <text evidence="1">Catalyzes the conversion of glucosamine-6-phosphate to glucosamine-1-phosphate.</text>
</comment>
<comment type="catalytic activity">
    <reaction evidence="1">
        <text>alpha-D-glucosamine 1-phosphate = D-glucosamine 6-phosphate</text>
        <dbReference type="Rhea" id="RHEA:23424"/>
        <dbReference type="ChEBI" id="CHEBI:58516"/>
        <dbReference type="ChEBI" id="CHEBI:58725"/>
        <dbReference type="EC" id="5.4.2.10"/>
    </reaction>
</comment>
<comment type="cofactor">
    <cofactor evidence="1">
        <name>Mg(2+)</name>
        <dbReference type="ChEBI" id="CHEBI:18420"/>
    </cofactor>
    <text evidence="1">Binds 1 Mg(2+) ion per subunit.</text>
</comment>
<comment type="PTM">
    <text evidence="1">Activated by phosphorylation.</text>
</comment>
<comment type="similarity">
    <text evidence="1">Belongs to the phosphohexose mutase family.</text>
</comment>
<feature type="chain" id="PRO_1000201067" description="Phosphoglucosamine mutase">
    <location>
        <begin position="1"/>
        <end position="451"/>
    </location>
</feature>
<feature type="active site" description="Phosphoserine intermediate" evidence="1">
    <location>
        <position position="107"/>
    </location>
</feature>
<feature type="binding site" description="via phosphate group" evidence="1">
    <location>
        <position position="107"/>
    </location>
    <ligand>
        <name>Mg(2+)</name>
        <dbReference type="ChEBI" id="CHEBI:18420"/>
    </ligand>
</feature>
<feature type="binding site" evidence="1">
    <location>
        <position position="246"/>
    </location>
    <ligand>
        <name>Mg(2+)</name>
        <dbReference type="ChEBI" id="CHEBI:18420"/>
    </ligand>
</feature>
<feature type="binding site" evidence="1">
    <location>
        <position position="248"/>
    </location>
    <ligand>
        <name>Mg(2+)</name>
        <dbReference type="ChEBI" id="CHEBI:18420"/>
    </ligand>
</feature>
<feature type="binding site" evidence="1">
    <location>
        <position position="250"/>
    </location>
    <ligand>
        <name>Mg(2+)</name>
        <dbReference type="ChEBI" id="CHEBI:18420"/>
    </ligand>
</feature>
<feature type="modified residue" description="Phosphoserine" evidence="1">
    <location>
        <position position="107"/>
    </location>
</feature>
<evidence type="ECO:0000255" key="1">
    <source>
        <dbReference type="HAMAP-Rule" id="MF_01554"/>
    </source>
</evidence>
<protein>
    <recommendedName>
        <fullName evidence="1">Phosphoglucosamine mutase</fullName>
        <ecNumber evidence="1">5.4.2.10</ecNumber>
    </recommendedName>
</protein>
<reference key="1">
    <citation type="submission" date="2008-02" db="EMBL/GenBank/DDBJ databases">
        <title>Complete sequence of chromosome 1 of Burkholderia cenocepacia MC0-3.</title>
        <authorList>
            <person name="Copeland A."/>
            <person name="Lucas S."/>
            <person name="Lapidus A."/>
            <person name="Barry K."/>
            <person name="Bruce D."/>
            <person name="Goodwin L."/>
            <person name="Glavina del Rio T."/>
            <person name="Dalin E."/>
            <person name="Tice H."/>
            <person name="Pitluck S."/>
            <person name="Chain P."/>
            <person name="Malfatti S."/>
            <person name="Shin M."/>
            <person name="Vergez L."/>
            <person name="Schmutz J."/>
            <person name="Larimer F."/>
            <person name="Land M."/>
            <person name="Hauser L."/>
            <person name="Kyrpides N."/>
            <person name="Mikhailova N."/>
            <person name="Tiedje J."/>
            <person name="Richardson P."/>
        </authorList>
    </citation>
    <scope>NUCLEOTIDE SEQUENCE [LARGE SCALE GENOMIC DNA]</scope>
    <source>
        <strain>MC0-3</strain>
    </source>
</reference>